<comment type="catalytic activity">
    <reaction evidence="1">
        <text>2-(N(omega)-L-arginino)succinate = fumarate + L-arginine</text>
        <dbReference type="Rhea" id="RHEA:24020"/>
        <dbReference type="ChEBI" id="CHEBI:29806"/>
        <dbReference type="ChEBI" id="CHEBI:32682"/>
        <dbReference type="ChEBI" id="CHEBI:57472"/>
        <dbReference type="EC" id="4.3.2.1"/>
    </reaction>
</comment>
<comment type="pathway">
    <text evidence="1">Amino-acid biosynthesis; L-arginine biosynthesis; L-arginine from L-ornithine and carbamoyl phosphate: step 3/3.</text>
</comment>
<comment type="subcellular location">
    <subcellularLocation>
        <location evidence="1">Cytoplasm</location>
    </subcellularLocation>
</comment>
<comment type="similarity">
    <text evidence="1">Belongs to the lyase 1 family. Argininosuccinate lyase subfamily.</text>
</comment>
<gene>
    <name evidence="1" type="primary">argH</name>
    <name type="ordered locus">Bcer98_3305</name>
</gene>
<name>ARLY_BACCN</name>
<evidence type="ECO:0000255" key="1">
    <source>
        <dbReference type="HAMAP-Rule" id="MF_00006"/>
    </source>
</evidence>
<reference key="1">
    <citation type="journal article" date="2008" name="Chem. Biol. Interact.">
        <title>Extending the Bacillus cereus group genomics to putative food-borne pathogens of different toxicity.</title>
        <authorList>
            <person name="Lapidus A."/>
            <person name="Goltsman E."/>
            <person name="Auger S."/>
            <person name="Galleron N."/>
            <person name="Segurens B."/>
            <person name="Dossat C."/>
            <person name="Land M.L."/>
            <person name="Broussolle V."/>
            <person name="Brillard J."/>
            <person name="Guinebretiere M.-H."/>
            <person name="Sanchis V."/>
            <person name="Nguen-the C."/>
            <person name="Lereclus D."/>
            <person name="Richardson P."/>
            <person name="Wincker P."/>
            <person name="Weissenbach J."/>
            <person name="Ehrlich S.D."/>
            <person name="Sorokin A."/>
        </authorList>
    </citation>
    <scope>NUCLEOTIDE SEQUENCE [LARGE SCALE GENOMIC DNA]</scope>
    <source>
        <strain>DSM 22905 / CIP 110041 / 391-98 / NVH 391-98</strain>
    </source>
</reference>
<organism>
    <name type="scientific">Bacillus cytotoxicus (strain DSM 22905 / CIP 110041 / 391-98 / NVH 391-98)</name>
    <dbReference type="NCBI Taxonomy" id="315749"/>
    <lineage>
        <taxon>Bacteria</taxon>
        <taxon>Bacillati</taxon>
        <taxon>Bacillota</taxon>
        <taxon>Bacilli</taxon>
        <taxon>Bacillales</taxon>
        <taxon>Bacillaceae</taxon>
        <taxon>Bacillus</taxon>
        <taxon>Bacillus cereus group</taxon>
    </lineage>
</organism>
<feature type="chain" id="PRO_0000321430" description="Argininosuccinate lyase">
    <location>
        <begin position="1"/>
        <end position="462"/>
    </location>
</feature>
<dbReference type="EC" id="4.3.2.1" evidence="1"/>
<dbReference type="EMBL" id="CP000764">
    <property type="protein sequence ID" value="ABS23522.1"/>
    <property type="molecule type" value="Genomic_DNA"/>
</dbReference>
<dbReference type="RefSeq" id="WP_012095763.1">
    <property type="nucleotide sequence ID" value="NC_009674.1"/>
</dbReference>
<dbReference type="SMR" id="A7GTR4"/>
<dbReference type="STRING" id="315749.Bcer98_3305"/>
<dbReference type="GeneID" id="33898550"/>
<dbReference type="KEGG" id="bcy:Bcer98_3305"/>
<dbReference type="eggNOG" id="COG0165">
    <property type="taxonomic scope" value="Bacteria"/>
</dbReference>
<dbReference type="HOGENOM" id="CLU_027272_2_3_9"/>
<dbReference type="OrthoDB" id="9769623at2"/>
<dbReference type="UniPathway" id="UPA00068">
    <property type="reaction ID" value="UER00114"/>
</dbReference>
<dbReference type="Proteomes" id="UP000002300">
    <property type="component" value="Chromosome"/>
</dbReference>
<dbReference type="GO" id="GO:0005829">
    <property type="term" value="C:cytosol"/>
    <property type="evidence" value="ECO:0007669"/>
    <property type="project" value="TreeGrafter"/>
</dbReference>
<dbReference type="GO" id="GO:0004056">
    <property type="term" value="F:argininosuccinate lyase activity"/>
    <property type="evidence" value="ECO:0007669"/>
    <property type="project" value="UniProtKB-UniRule"/>
</dbReference>
<dbReference type="GO" id="GO:0042450">
    <property type="term" value="P:arginine biosynthetic process via ornithine"/>
    <property type="evidence" value="ECO:0007669"/>
    <property type="project" value="InterPro"/>
</dbReference>
<dbReference type="GO" id="GO:0006526">
    <property type="term" value="P:L-arginine biosynthetic process"/>
    <property type="evidence" value="ECO:0007669"/>
    <property type="project" value="UniProtKB-UniRule"/>
</dbReference>
<dbReference type="CDD" id="cd01359">
    <property type="entry name" value="Argininosuccinate_lyase"/>
    <property type="match status" value="1"/>
</dbReference>
<dbReference type="FunFam" id="1.10.275.10:FF:000002">
    <property type="entry name" value="Argininosuccinate lyase"/>
    <property type="match status" value="1"/>
</dbReference>
<dbReference type="FunFam" id="1.10.40.30:FF:000001">
    <property type="entry name" value="Argininosuccinate lyase"/>
    <property type="match status" value="1"/>
</dbReference>
<dbReference type="FunFam" id="1.20.200.10:FF:000006">
    <property type="entry name" value="Argininosuccinate lyase"/>
    <property type="match status" value="1"/>
</dbReference>
<dbReference type="Gene3D" id="1.10.40.30">
    <property type="entry name" value="Fumarase/aspartase (C-terminal domain)"/>
    <property type="match status" value="1"/>
</dbReference>
<dbReference type="Gene3D" id="1.20.200.10">
    <property type="entry name" value="Fumarase/aspartase (Central domain)"/>
    <property type="match status" value="1"/>
</dbReference>
<dbReference type="Gene3D" id="1.10.275.10">
    <property type="entry name" value="Fumarase/aspartase (N-terminal domain)"/>
    <property type="match status" value="1"/>
</dbReference>
<dbReference type="HAMAP" id="MF_00006">
    <property type="entry name" value="Arg_succ_lyase"/>
    <property type="match status" value="1"/>
</dbReference>
<dbReference type="InterPro" id="IPR029419">
    <property type="entry name" value="Arg_succ_lyase_C"/>
</dbReference>
<dbReference type="InterPro" id="IPR009049">
    <property type="entry name" value="Argininosuccinate_lyase"/>
</dbReference>
<dbReference type="InterPro" id="IPR024083">
    <property type="entry name" value="Fumarase/histidase_N"/>
</dbReference>
<dbReference type="InterPro" id="IPR020557">
    <property type="entry name" value="Fumarate_lyase_CS"/>
</dbReference>
<dbReference type="InterPro" id="IPR000362">
    <property type="entry name" value="Fumarate_lyase_fam"/>
</dbReference>
<dbReference type="InterPro" id="IPR022761">
    <property type="entry name" value="Fumarate_lyase_N"/>
</dbReference>
<dbReference type="InterPro" id="IPR008948">
    <property type="entry name" value="L-Aspartase-like"/>
</dbReference>
<dbReference type="NCBIfam" id="TIGR00838">
    <property type="entry name" value="argH"/>
    <property type="match status" value="1"/>
</dbReference>
<dbReference type="PANTHER" id="PTHR43814">
    <property type="entry name" value="ARGININOSUCCINATE LYASE"/>
    <property type="match status" value="1"/>
</dbReference>
<dbReference type="PANTHER" id="PTHR43814:SF1">
    <property type="entry name" value="ARGININOSUCCINATE LYASE"/>
    <property type="match status" value="1"/>
</dbReference>
<dbReference type="Pfam" id="PF14698">
    <property type="entry name" value="ASL_C2"/>
    <property type="match status" value="1"/>
</dbReference>
<dbReference type="Pfam" id="PF00206">
    <property type="entry name" value="Lyase_1"/>
    <property type="match status" value="1"/>
</dbReference>
<dbReference type="PRINTS" id="PR00145">
    <property type="entry name" value="ARGSUCLYASE"/>
</dbReference>
<dbReference type="PRINTS" id="PR00149">
    <property type="entry name" value="FUMRATELYASE"/>
</dbReference>
<dbReference type="SUPFAM" id="SSF48557">
    <property type="entry name" value="L-aspartase-like"/>
    <property type="match status" value="1"/>
</dbReference>
<dbReference type="PROSITE" id="PS00163">
    <property type="entry name" value="FUMARATE_LYASES"/>
    <property type="match status" value="1"/>
</dbReference>
<protein>
    <recommendedName>
        <fullName evidence="1">Argininosuccinate lyase</fullName>
        <shortName evidence="1">ASAL</shortName>
        <ecNumber evidence="1">4.3.2.1</ecNumber>
    </recommendedName>
    <alternativeName>
        <fullName evidence="1">Arginosuccinase</fullName>
    </alternativeName>
</protein>
<keyword id="KW-0028">Amino-acid biosynthesis</keyword>
<keyword id="KW-0055">Arginine biosynthesis</keyword>
<keyword id="KW-0963">Cytoplasm</keyword>
<keyword id="KW-0456">Lyase</keyword>
<proteinExistence type="inferred from homology"/>
<sequence>MSKLWGGRFTEEAEAWVEEFGASISFDKQLVKQDIEGSIAHVMMLAKQGIVTNDEAEKIKEGLQYLLEEAKENKLHFSVEAEDVHLNIEKMLIEQIGEVGGKLHTGRSRNDQVATDMHLYLKEKVQDIINAIKQLQKVLVDQAEENIETIMPGYTHLQRAQPISFAHHILAYFWMLERDVNRYEDSLKRINVSPLGAGALAGTTFPIDRAYSAKLLDFEGIYENSLDAVSDRDFILEFLSNSSMLMMHISRFCEELILWSSQEFQFIEMSDRYATGSSIMPQKKNPDMAELIRGKTGRVYGNLFSLLTVMKGLPLAYNKDLQEDKEGMFDTVKTVEGCLHIMAGMLETMTVNKENMGQAVTQDFSNATEVADYLANKGLPFRQAHEIVGKLVLHCTKKGIYLLDVPLETYKEMSPLFEEDLYEVLSPYAAVKRRNSAGGTGFVQIEQALEKAKILVGEVTRN</sequence>
<accession>A7GTR4</accession>